<feature type="chain" id="PRO_0000104787" description="Large ribosomal subunit protein uL15">
    <location>
        <begin position="1"/>
        <end position="144"/>
    </location>
</feature>
<feature type="region of interest" description="Disordered" evidence="2">
    <location>
        <begin position="1"/>
        <end position="57"/>
    </location>
</feature>
<feature type="compositionally biased region" description="Gly residues" evidence="2">
    <location>
        <begin position="21"/>
        <end position="31"/>
    </location>
</feature>
<dbReference type="EMBL" id="AE016853">
    <property type="protein sequence ID" value="AAO54187.1"/>
    <property type="molecule type" value="Genomic_DNA"/>
</dbReference>
<dbReference type="RefSeq" id="NP_790492.1">
    <property type="nucleotide sequence ID" value="NC_004578.1"/>
</dbReference>
<dbReference type="RefSeq" id="WP_002555470.1">
    <property type="nucleotide sequence ID" value="NC_004578.1"/>
</dbReference>
<dbReference type="SMR" id="Q889V2"/>
<dbReference type="STRING" id="223283.PSPTO_0645"/>
<dbReference type="GeneID" id="96221011"/>
<dbReference type="KEGG" id="pst:PSPTO_0645"/>
<dbReference type="PATRIC" id="fig|223283.9.peg.651"/>
<dbReference type="eggNOG" id="COG0200">
    <property type="taxonomic scope" value="Bacteria"/>
</dbReference>
<dbReference type="HOGENOM" id="CLU_055188_4_2_6"/>
<dbReference type="OrthoDB" id="9810293at2"/>
<dbReference type="PhylomeDB" id="Q889V2"/>
<dbReference type="Proteomes" id="UP000002515">
    <property type="component" value="Chromosome"/>
</dbReference>
<dbReference type="GO" id="GO:0022625">
    <property type="term" value="C:cytosolic large ribosomal subunit"/>
    <property type="evidence" value="ECO:0007669"/>
    <property type="project" value="TreeGrafter"/>
</dbReference>
<dbReference type="GO" id="GO:0019843">
    <property type="term" value="F:rRNA binding"/>
    <property type="evidence" value="ECO:0007669"/>
    <property type="project" value="UniProtKB-UniRule"/>
</dbReference>
<dbReference type="GO" id="GO:0003735">
    <property type="term" value="F:structural constituent of ribosome"/>
    <property type="evidence" value="ECO:0007669"/>
    <property type="project" value="InterPro"/>
</dbReference>
<dbReference type="GO" id="GO:0006412">
    <property type="term" value="P:translation"/>
    <property type="evidence" value="ECO:0007669"/>
    <property type="project" value="UniProtKB-UniRule"/>
</dbReference>
<dbReference type="Gene3D" id="3.100.10.10">
    <property type="match status" value="1"/>
</dbReference>
<dbReference type="HAMAP" id="MF_01341">
    <property type="entry name" value="Ribosomal_uL15"/>
    <property type="match status" value="1"/>
</dbReference>
<dbReference type="InterPro" id="IPR030878">
    <property type="entry name" value="Ribosomal_uL15"/>
</dbReference>
<dbReference type="InterPro" id="IPR021131">
    <property type="entry name" value="Ribosomal_uL15/eL18"/>
</dbReference>
<dbReference type="InterPro" id="IPR036227">
    <property type="entry name" value="Ribosomal_uL15/eL18_sf"/>
</dbReference>
<dbReference type="InterPro" id="IPR005749">
    <property type="entry name" value="Ribosomal_uL15_bac-type"/>
</dbReference>
<dbReference type="InterPro" id="IPR001196">
    <property type="entry name" value="Ribosomal_uL15_CS"/>
</dbReference>
<dbReference type="NCBIfam" id="TIGR01071">
    <property type="entry name" value="rplO_bact"/>
    <property type="match status" value="1"/>
</dbReference>
<dbReference type="PANTHER" id="PTHR12934">
    <property type="entry name" value="50S RIBOSOMAL PROTEIN L15"/>
    <property type="match status" value="1"/>
</dbReference>
<dbReference type="PANTHER" id="PTHR12934:SF11">
    <property type="entry name" value="LARGE RIBOSOMAL SUBUNIT PROTEIN UL15M"/>
    <property type="match status" value="1"/>
</dbReference>
<dbReference type="Pfam" id="PF00828">
    <property type="entry name" value="Ribosomal_L27A"/>
    <property type="match status" value="1"/>
</dbReference>
<dbReference type="SUPFAM" id="SSF52080">
    <property type="entry name" value="Ribosomal proteins L15p and L18e"/>
    <property type="match status" value="1"/>
</dbReference>
<dbReference type="PROSITE" id="PS00475">
    <property type="entry name" value="RIBOSOMAL_L15"/>
    <property type="match status" value="1"/>
</dbReference>
<accession>Q889V2</accession>
<protein>
    <recommendedName>
        <fullName evidence="1">Large ribosomal subunit protein uL15</fullName>
    </recommendedName>
    <alternativeName>
        <fullName evidence="3">50S ribosomal protein L15</fullName>
    </alternativeName>
</protein>
<sequence>MKLNDLSPAPGSRREKHRPGRGIGSGLGKTGGRGHKGQSSRSGGTIAPGFEGGQQPLHRRLPKFGFVSLKAMDRAEVRLSELAKVEGDIVTVQSLKDANVINQNVQRVKIMLSGEVTRAVTIKGIAATKGARAAIEAAGGKFEE</sequence>
<gene>
    <name evidence="1" type="primary">rplO</name>
    <name type="ordered locus">PSPTO_0645</name>
</gene>
<organism>
    <name type="scientific">Pseudomonas syringae pv. tomato (strain ATCC BAA-871 / DC3000)</name>
    <dbReference type="NCBI Taxonomy" id="223283"/>
    <lineage>
        <taxon>Bacteria</taxon>
        <taxon>Pseudomonadati</taxon>
        <taxon>Pseudomonadota</taxon>
        <taxon>Gammaproteobacteria</taxon>
        <taxon>Pseudomonadales</taxon>
        <taxon>Pseudomonadaceae</taxon>
        <taxon>Pseudomonas</taxon>
    </lineage>
</organism>
<keyword id="KW-1185">Reference proteome</keyword>
<keyword id="KW-0687">Ribonucleoprotein</keyword>
<keyword id="KW-0689">Ribosomal protein</keyword>
<keyword id="KW-0694">RNA-binding</keyword>
<keyword id="KW-0699">rRNA-binding</keyword>
<comment type="function">
    <text evidence="1">Binds to the 23S rRNA.</text>
</comment>
<comment type="subunit">
    <text evidence="1">Part of the 50S ribosomal subunit.</text>
</comment>
<comment type="similarity">
    <text evidence="1">Belongs to the universal ribosomal protein uL15 family.</text>
</comment>
<proteinExistence type="inferred from homology"/>
<reference key="1">
    <citation type="journal article" date="2003" name="Proc. Natl. Acad. Sci. U.S.A.">
        <title>The complete genome sequence of the Arabidopsis and tomato pathogen Pseudomonas syringae pv. tomato DC3000.</title>
        <authorList>
            <person name="Buell C.R."/>
            <person name="Joardar V."/>
            <person name="Lindeberg M."/>
            <person name="Selengut J."/>
            <person name="Paulsen I.T."/>
            <person name="Gwinn M.L."/>
            <person name="Dodson R.J."/>
            <person name="DeBoy R.T."/>
            <person name="Durkin A.S."/>
            <person name="Kolonay J.F."/>
            <person name="Madupu R."/>
            <person name="Daugherty S.C."/>
            <person name="Brinkac L.M."/>
            <person name="Beanan M.J."/>
            <person name="Haft D.H."/>
            <person name="Nelson W.C."/>
            <person name="Davidsen T.M."/>
            <person name="Zafar N."/>
            <person name="Zhou L."/>
            <person name="Liu J."/>
            <person name="Yuan Q."/>
            <person name="Khouri H.M."/>
            <person name="Fedorova N.B."/>
            <person name="Tran B."/>
            <person name="Russell D."/>
            <person name="Berry K.J."/>
            <person name="Utterback T.R."/>
            <person name="Van Aken S.E."/>
            <person name="Feldblyum T.V."/>
            <person name="D'Ascenzo M."/>
            <person name="Deng W.-L."/>
            <person name="Ramos A.R."/>
            <person name="Alfano J.R."/>
            <person name="Cartinhour S."/>
            <person name="Chatterjee A.K."/>
            <person name="Delaney T.P."/>
            <person name="Lazarowitz S.G."/>
            <person name="Martin G.B."/>
            <person name="Schneider D.J."/>
            <person name="Tang X."/>
            <person name="Bender C.L."/>
            <person name="White O."/>
            <person name="Fraser C.M."/>
            <person name="Collmer A."/>
        </authorList>
    </citation>
    <scope>NUCLEOTIDE SEQUENCE [LARGE SCALE GENOMIC DNA]</scope>
    <source>
        <strain>ATCC BAA-871 / DC3000</strain>
    </source>
</reference>
<evidence type="ECO:0000255" key="1">
    <source>
        <dbReference type="HAMAP-Rule" id="MF_01341"/>
    </source>
</evidence>
<evidence type="ECO:0000256" key="2">
    <source>
        <dbReference type="SAM" id="MobiDB-lite"/>
    </source>
</evidence>
<evidence type="ECO:0000305" key="3"/>
<name>RL15_PSESM</name>